<protein>
    <recommendedName>
        <fullName>Mercuric resistance operon regulatory protein</fullName>
    </recommendedName>
</protein>
<feature type="chain" id="PRO_0000098138" description="Mercuric resistance operon regulatory protein">
    <location>
        <begin position="1"/>
        <end position="144"/>
    </location>
</feature>
<feature type="domain" description="HTH merR-type" evidence="2">
    <location>
        <begin position="7"/>
        <end position="76"/>
    </location>
</feature>
<feature type="DNA-binding region" description="H-T-H motif" evidence="2">
    <location>
        <begin position="10"/>
        <end position="29"/>
    </location>
</feature>
<feature type="binding site" evidence="1">
    <location>
        <position position="82"/>
    </location>
    <ligand>
        <name>Hg(2+)</name>
        <dbReference type="ChEBI" id="CHEBI:16793"/>
    </ligand>
</feature>
<feature type="binding site" evidence="1">
    <location>
        <position position="117"/>
    </location>
    <ligand>
        <name>Hg(2+)</name>
        <dbReference type="ChEBI" id="CHEBI:16793"/>
    </ligand>
</feature>
<feature type="binding site" evidence="1">
    <location>
        <position position="126"/>
    </location>
    <ligand>
        <name>Hg(2+)</name>
        <dbReference type="ChEBI" id="CHEBI:16793"/>
    </ligand>
</feature>
<organism>
    <name type="scientific">Pseudomonas sp</name>
    <dbReference type="NCBI Taxonomy" id="306"/>
    <lineage>
        <taxon>Bacteria</taxon>
        <taxon>Pseudomonadati</taxon>
        <taxon>Pseudomonadota</taxon>
        <taxon>Gammaproteobacteria</taxon>
        <taxon>Pseudomonadales</taxon>
        <taxon>Pseudomonadaceae</taxon>
        <taxon>Pseudomonas</taxon>
    </lineage>
</organism>
<sequence length="144" mass="15763">MENNLENLTIGVFAKAAGVNVETIRFYQRKGLLLEPDKPYGSIRRYGEADVTRVRFVKSAQRLGFSLDEIAELLRLEDGTHCEEASSLAEHKLKDVREKMADLARMEAVLSELVCACHARRGNVSCPLIASLQGGASLAGSAMP</sequence>
<name>MERR_PSESP</name>
<geneLocation type="plasmid"/>
<accession>P69413</accession>
<accession>P06688</accession>
<dbReference type="EMBL" id="Z33489">
    <property type="protein sequence ID" value="CAA83897.1"/>
    <property type="molecule type" value="Genomic_DNA"/>
</dbReference>
<dbReference type="RefSeq" id="WP_003131969.1">
    <property type="nucleotide sequence ID" value="NZ_JAWFLI010000017.1"/>
</dbReference>
<dbReference type="SMR" id="P69413"/>
<dbReference type="GO" id="GO:0003677">
    <property type="term" value="F:DNA binding"/>
    <property type="evidence" value="ECO:0007669"/>
    <property type="project" value="UniProtKB-KW"/>
</dbReference>
<dbReference type="GO" id="GO:0003700">
    <property type="term" value="F:DNA-binding transcription factor activity"/>
    <property type="evidence" value="ECO:0007669"/>
    <property type="project" value="InterPro"/>
</dbReference>
<dbReference type="GO" id="GO:0045340">
    <property type="term" value="F:mercury ion binding"/>
    <property type="evidence" value="ECO:0007669"/>
    <property type="project" value="InterPro"/>
</dbReference>
<dbReference type="GO" id="GO:0046689">
    <property type="term" value="P:response to mercury ion"/>
    <property type="evidence" value="ECO:0007669"/>
    <property type="project" value="UniProtKB-KW"/>
</dbReference>
<dbReference type="CDD" id="cd04783">
    <property type="entry name" value="HTH_MerR1"/>
    <property type="match status" value="1"/>
</dbReference>
<dbReference type="Gene3D" id="1.10.1660.10">
    <property type="match status" value="1"/>
</dbReference>
<dbReference type="InterPro" id="IPR009061">
    <property type="entry name" value="DNA-bd_dom_put_sf"/>
</dbReference>
<dbReference type="InterPro" id="IPR011794">
    <property type="entry name" value="MerR"/>
</dbReference>
<dbReference type="InterPro" id="IPR000551">
    <property type="entry name" value="MerR-type_HTH_dom"/>
</dbReference>
<dbReference type="InterPro" id="IPR047057">
    <property type="entry name" value="MerR_fam"/>
</dbReference>
<dbReference type="InterPro" id="IPR015358">
    <property type="entry name" value="Tscrpt_reg_MerR_DNA-bd"/>
</dbReference>
<dbReference type="NCBIfam" id="TIGR02051">
    <property type="entry name" value="MerR"/>
    <property type="match status" value="1"/>
</dbReference>
<dbReference type="NCBIfam" id="NF010315">
    <property type="entry name" value="PRK13752.1"/>
    <property type="match status" value="1"/>
</dbReference>
<dbReference type="PANTHER" id="PTHR30204:SF69">
    <property type="entry name" value="MERR-FAMILY TRANSCRIPTIONAL REGULATOR"/>
    <property type="match status" value="1"/>
</dbReference>
<dbReference type="PANTHER" id="PTHR30204">
    <property type="entry name" value="REDOX-CYCLING DRUG-SENSING TRANSCRIPTIONAL ACTIVATOR SOXR"/>
    <property type="match status" value="1"/>
</dbReference>
<dbReference type="Pfam" id="PF00376">
    <property type="entry name" value="MerR"/>
    <property type="match status" value="1"/>
</dbReference>
<dbReference type="Pfam" id="PF09278">
    <property type="entry name" value="MerR-DNA-bind"/>
    <property type="match status" value="1"/>
</dbReference>
<dbReference type="PRINTS" id="PR00040">
    <property type="entry name" value="HTHMERR"/>
</dbReference>
<dbReference type="SMART" id="SM00422">
    <property type="entry name" value="HTH_MERR"/>
    <property type="match status" value="1"/>
</dbReference>
<dbReference type="SUPFAM" id="SSF46955">
    <property type="entry name" value="Putative DNA-binding domain"/>
    <property type="match status" value="1"/>
</dbReference>
<dbReference type="PROSITE" id="PS00552">
    <property type="entry name" value="HTH_MERR_1"/>
    <property type="match status" value="1"/>
</dbReference>
<dbReference type="PROSITE" id="PS50937">
    <property type="entry name" value="HTH_MERR_2"/>
    <property type="match status" value="1"/>
</dbReference>
<gene>
    <name type="primary">merR</name>
</gene>
<comment type="function">
    <text evidence="1">Mediates the mercuric-dependent induction of mercury resistance operon. In the absence of mercury MerR represses transcription by binding tightly to the mer operator region; when mercury is present the dimeric complex binds a single ion and becomes a potent transcriptional activator, while remaining bound to the mer site (By similarity).</text>
</comment>
<reference key="1">
    <citation type="submission" date="1994-12" db="EMBL/GenBank/DDBJ databases">
        <title>Sequence conservation between regulatory mercury resistance genes from mercury polluted and pristine environments.</title>
        <authorList>
            <person name="Osborn A.M."/>
            <person name="Bruce K.D."/>
            <person name="Strike P."/>
            <person name="Ritchie D.A."/>
        </authorList>
    </citation>
    <scope>NUCLEOTIDE SEQUENCE [GENOMIC DNA]</scope>
    <source>
        <strain>SB3</strain>
    </source>
</reference>
<evidence type="ECO:0000250" key="1"/>
<evidence type="ECO:0000255" key="2">
    <source>
        <dbReference type="PROSITE-ProRule" id="PRU00254"/>
    </source>
</evidence>
<proteinExistence type="inferred from homology"/>
<keyword id="KW-0010">Activator</keyword>
<keyword id="KW-0238">DNA-binding</keyword>
<keyword id="KW-0475">Mercuric resistance</keyword>
<keyword id="KW-0476">Mercury</keyword>
<keyword id="KW-0479">Metal-binding</keyword>
<keyword id="KW-0614">Plasmid</keyword>
<keyword id="KW-0678">Repressor</keyword>
<keyword id="KW-0804">Transcription</keyword>
<keyword id="KW-0805">Transcription regulation</keyword>